<sequence>MNFETIIGLEVHVELNTNSKIFSPSSAHFGEDPNANTNVIDWSFPGVLPVMNKGVIDAGIKAALALNMDIHKEMHFDRKNYFYPDNPKAYQISQFDEPIGYNGWIKIKLEDGSTKKIRIERAHLEEDAGKNTHGTDGYSYVDLNRQGVPLIEIVSEADMRSPEEAYAYLTALKEIIQYTGISDVKMEEGSMRVDANISLRPYGQEQFGTKTELKNLNSFSNVRKGLEFEVERQAKLLRSGGVIRQETRRYDEANKGTILMRVKEGAADYRYFPEPDLPLYEIDDAWIDEMRAQLPQFPAQRRAKYEEELGLSAYDASQLTATKVLSDYFETAVSLGGDAKQVSNWLQGEVAQFLNAEGKTIEEIALTPENLVEMIAIIADGTISSKMAKKVFVHLAKNGGSARAYVEKAGLVQISDPAVLVPIIHQVFADNEAAVADFKSGKRNADKAFTGFLMKATKGQANPQVAQQLLAQELQKLRD</sequence>
<gene>
    <name evidence="1" type="primary">gatB</name>
    <name type="ordered locus">MGAS9429_Spy1508</name>
</gene>
<keyword id="KW-0067">ATP-binding</keyword>
<keyword id="KW-0436">Ligase</keyword>
<keyword id="KW-0547">Nucleotide-binding</keyword>
<keyword id="KW-0648">Protein biosynthesis</keyword>
<accession>Q1JKC8</accession>
<organism>
    <name type="scientific">Streptococcus pyogenes serotype M12 (strain MGAS9429)</name>
    <dbReference type="NCBI Taxonomy" id="370551"/>
    <lineage>
        <taxon>Bacteria</taxon>
        <taxon>Bacillati</taxon>
        <taxon>Bacillota</taxon>
        <taxon>Bacilli</taxon>
        <taxon>Lactobacillales</taxon>
        <taxon>Streptococcaceae</taxon>
        <taxon>Streptococcus</taxon>
    </lineage>
</organism>
<dbReference type="EC" id="6.3.5.-" evidence="1"/>
<dbReference type="EMBL" id="CP000259">
    <property type="protein sequence ID" value="ABF32695.1"/>
    <property type="molecule type" value="Genomic_DNA"/>
</dbReference>
<dbReference type="RefSeq" id="WP_002988563.1">
    <property type="nucleotide sequence ID" value="NC_008021.1"/>
</dbReference>
<dbReference type="SMR" id="Q1JKC8"/>
<dbReference type="KEGG" id="spk:MGAS9429_Spy1508"/>
<dbReference type="HOGENOM" id="CLU_019240_0_0_9"/>
<dbReference type="Proteomes" id="UP000002433">
    <property type="component" value="Chromosome"/>
</dbReference>
<dbReference type="GO" id="GO:0050566">
    <property type="term" value="F:asparaginyl-tRNA synthase (glutamine-hydrolyzing) activity"/>
    <property type="evidence" value="ECO:0007669"/>
    <property type="project" value="RHEA"/>
</dbReference>
<dbReference type="GO" id="GO:0005524">
    <property type="term" value="F:ATP binding"/>
    <property type="evidence" value="ECO:0007669"/>
    <property type="project" value="UniProtKB-KW"/>
</dbReference>
<dbReference type="GO" id="GO:0050567">
    <property type="term" value="F:glutaminyl-tRNA synthase (glutamine-hydrolyzing) activity"/>
    <property type="evidence" value="ECO:0007669"/>
    <property type="project" value="UniProtKB-UniRule"/>
</dbReference>
<dbReference type="GO" id="GO:0070681">
    <property type="term" value="P:glutaminyl-tRNAGln biosynthesis via transamidation"/>
    <property type="evidence" value="ECO:0007669"/>
    <property type="project" value="TreeGrafter"/>
</dbReference>
<dbReference type="GO" id="GO:0006412">
    <property type="term" value="P:translation"/>
    <property type="evidence" value="ECO:0007669"/>
    <property type="project" value="UniProtKB-UniRule"/>
</dbReference>
<dbReference type="FunFam" id="1.10.10.410:FF:000001">
    <property type="entry name" value="Aspartyl/glutamyl-tRNA(Asn/Gln) amidotransferase subunit B"/>
    <property type="match status" value="1"/>
</dbReference>
<dbReference type="FunFam" id="1.10.150.380:FF:000001">
    <property type="entry name" value="Aspartyl/glutamyl-tRNA(Asn/Gln) amidotransferase subunit B"/>
    <property type="match status" value="1"/>
</dbReference>
<dbReference type="Gene3D" id="1.10.10.410">
    <property type="match status" value="1"/>
</dbReference>
<dbReference type="Gene3D" id="1.10.150.380">
    <property type="entry name" value="GatB domain, N-terminal subdomain"/>
    <property type="match status" value="1"/>
</dbReference>
<dbReference type="HAMAP" id="MF_00121">
    <property type="entry name" value="GatB"/>
    <property type="match status" value="1"/>
</dbReference>
<dbReference type="InterPro" id="IPR017959">
    <property type="entry name" value="Asn/Gln-tRNA_amidoTrfase_suB/E"/>
</dbReference>
<dbReference type="InterPro" id="IPR006075">
    <property type="entry name" value="Asn/Gln-tRNA_Trfase_suB/E_cat"/>
</dbReference>
<dbReference type="InterPro" id="IPR018027">
    <property type="entry name" value="Asn/Gln_amidotransferase"/>
</dbReference>
<dbReference type="InterPro" id="IPR003789">
    <property type="entry name" value="Asn/Gln_tRNA_amidoTrase-B-like"/>
</dbReference>
<dbReference type="InterPro" id="IPR004413">
    <property type="entry name" value="GatB"/>
</dbReference>
<dbReference type="InterPro" id="IPR042114">
    <property type="entry name" value="GatB_C_1"/>
</dbReference>
<dbReference type="InterPro" id="IPR023168">
    <property type="entry name" value="GatB_Yqey_C_2"/>
</dbReference>
<dbReference type="InterPro" id="IPR017958">
    <property type="entry name" value="Gln-tRNA_amidoTrfase_suB_CS"/>
</dbReference>
<dbReference type="InterPro" id="IPR014746">
    <property type="entry name" value="Gln_synth/guanido_kin_cat_dom"/>
</dbReference>
<dbReference type="NCBIfam" id="TIGR00133">
    <property type="entry name" value="gatB"/>
    <property type="match status" value="1"/>
</dbReference>
<dbReference type="NCBIfam" id="NF004011">
    <property type="entry name" value="PRK05477.1-1"/>
    <property type="match status" value="1"/>
</dbReference>
<dbReference type="NCBIfam" id="NF004012">
    <property type="entry name" value="PRK05477.1-2"/>
    <property type="match status" value="1"/>
</dbReference>
<dbReference type="NCBIfam" id="NF004014">
    <property type="entry name" value="PRK05477.1-4"/>
    <property type="match status" value="1"/>
</dbReference>
<dbReference type="PANTHER" id="PTHR11659">
    <property type="entry name" value="GLUTAMYL-TRNA GLN AMIDOTRANSFERASE SUBUNIT B MITOCHONDRIAL AND PROKARYOTIC PET112-RELATED"/>
    <property type="match status" value="1"/>
</dbReference>
<dbReference type="PANTHER" id="PTHR11659:SF0">
    <property type="entry name" value="GLUTAMYL-TRNA(GLN) AMIDOTRANSFERASE SUBUNIT B, MITOCHONDRIAL"/>
    <property type="match status" value="1"/>
</dbReference>
<dbReference type="Pfam" id="PF02934">
    <property type="entry name" value="GatB_N"/>
    <property type="match status" value="1"/>
</dbReference>
<dbReference type="Pfam" id="PF02637">
    <property type="entry name" value="GatB_Yqey"/>
    <property type="match status" value="1"/>
</dbReference>
<dbReference type="SMART" id="SM00845">
    <property type="entry name" value="GatB_Yqey"/>
    <property type="match status" value="1"/>
</dbReference>
<dbReference type="SUPFAM" id="SSF89095">
    <property type="entry name" value="GatB/YqeY motif"/>
    <property type="match status" value="1"/>
</dbReference>
<dbReference type="SUPFAM" id="SSF55931">
    <property type="entry name" value="Glutamine synthetase/guanido kinase"/>
    <property type="match status" value="1"/>
</dbReference>
<dbReference type="PROSITE" id="PS01234">
    <property type="entry name" value="GATB"/>
    <property type="match status" value="1"/>
</dbReference>
<comment type="function">
    <text evidence="1">Allows the formation of correctly charged Asn-tRNA(Asn) or Gln-tRNA(Gln) through the transamidation of misacylated Asp-tRNA(Asn) or Glu-tRNA(Gln) in organisms which lack either or both of asparaginyl-tRNA or glutaminyl-tRNA synthetases. The reaction takes place in the presence of glutamine and ATP through an activated phospho-Asp-tRNA(Asn) or phospho-Glu-tRNA(Gln).</text>
</comment>
<comment type="catalytic activity">
    <reaction evidence="1">
        <text>L-glutamyl-tRNA(Gln) + L-glutamine + ATP + H2O = L-glutaminyl-tRNA(Gln) + L-glutamate + ADP + phosphate + H(+)</text>
        <dbReference type="Rhea" id="RHEA:17521"/>
        <dbReference type="Rhea" id="RHEA-COMP:9681"/>
        <dbReference type="Rhea" id="RHEA-COMP:9684"/>
        <dbReference type="ChEBI" id="CHEBI:15377"/>
        <dbReference type="ChEBI" id="CHEBI:15378"/>
        <dbReference type="ChEBI" id="CHEBI:29985"/>
        <dbReference type="ChEBI" id="CHEBI:30616"/>
        <dbReference type="ChEBI" id="CHEBI:43474"/>
        <dbReference type="ChEBI" id="CHEBI:58359"/>
        <dbReference type="ChEBI" id="CHEBI:78520"/>
        <dbReference type="ChEBI" id="CHEBI:78521"/>
        <dbReference type="ChEBI" id="CHEBI:456216"/>
    </reaction>
</comment>
<comment type="catalytic activity">
    <reaction evidence="1">
        <text>L-aspartyl-tRNA(Asn) + L-glutamine + ATP + H2O = L-asparaginyl-tRNA(Asn) + L-glutamate + ADP + phosphate + 2 H(+)</text>
        <dbReference type="Rhea" id="RHEA:14513"/>
        <dbReference type="Rhea" id="RHEA-COMP:9674"/>
        <dbReference type="Rhea" id="RHEA-COMP:9677"/>
        <dbReference type="ChEBI" id="CHEBI:15377"/>
        <dbReference type="ChEBI" id="CHEBI:15378"/>
        <dbReference type="ChEBI" id="CHEBI:29985"/>
        <dbReference type="ChEBI" id="CHEBI:30616"/>
        <dbReference type="ChEBI" id="CHEBI:43474"/>
        <dbReference type="ChEBI" id="CHEBI:58359"/>
        <dbReference type="ChEBI" id="CHEBI:78515"/>
        <dbReference type="ChEBI" id="CHEBI:78516"/>
        <dbReference type="ChEBI" id="CHEBI:456216"/>
    </reaction>
</comment>
<comment type="subunit">
    <text evidence="1">Heterotrimer of A, B and C subunits.</text>
</comment>
<comment type="similarity">
    <text evidence="1">Belongs to the GatB/GatE family. GatB subfamily.</text>
</comment>
<proteinExistence type="inferred from homology"/>
<evidence type="ECO:0000255" key="1">
    <source>
        <dbReference type="HAMAP-Rule" id="MF_00121"/>
    </source>
</evidence>
<protein>
    <recommendedName>
        <fullName evidence="1">Aspartyl/glutamyl-tRNA(Asn/Gln) amidotransferase subunit B</fullName>
        <shortName evidence="1">Asp/Glu-ADT subunit B</shortName>
        <ecNumber evidence="1">6.3.5.-</ecNumber>
    </recommendedName>
</protein>
<name>GATB_STRPC</name>
<reference key="1">
    <citation type="journal article" date="2006" name="Proc. Natl. Acad. Sci. U.S.A.">
        <title>Molecular genetic anatomy of inter- and intraserotype variation in the human bacterial pathogen group A Streptococcus.</title>
        <authorList>
            <person name="Beres S.B."/>
            <person name="Richter E.W."/>
            <person name="Nagiec M.J."/>
            <person name="Sumby P."/>
            <person name="Porcella S.F."/>
            <person name="DeLeo F.R."/>
            <person name="Musser J.M."/>
        </authorList>
    </citation>
    <scope>NUCLEOTIDE SEQUENCE [LARGE SCALE GENOMIC DNA]</scope>
    <source>
        <strain>MGAS9429</strain>
    </source>
</reference>
<feature type="chain" id="PRO_1000016045" description="Aspartyl/glutamyl-tRNA(Asn/Gln) amidotransferase subunit B">
    <location>
        <begin position="1"/>
        <end position="479"/>
    </location>
</feature>